<accession>B2S5B9</accession>
<comment type="function">
    <text evidence="1">Nucleotidase that shows phosphatase activity on nucleoside 5'-monophosphates.</text>
</comment>
<comment type="catalytic activity">
    <reaction evidence="1">
        <text>a ribonucleoside 5'-phosphate + H2O = a ribonucleoside + phosphate</text>
        <dbReference type="Rhea" id="RHEA:12484"/>
        <dbReference type="ChEBI" id="CHEBI:15377"/>
        <dbReference type="ChEBI" id="CHEBI:18254"/>
        <dbReference type="ChEBI" id="CHEBI:43474"/>
        <dbReference type="ChEBI" id="CHEBI:58043"/>
        <dbReference type="EC" id="3.1.3.5"/>
    </reaction>
</comment>
<comment type="cofactor">
    <cofactor evidence="1">
        <name>a divalent metal cation</name>
        <dbReference type="ChEBI" id="CHEBI:60240"/>
    </cofactor>
    <text evidence="1">Binds 1 divalent metal cation per subunit.</text>
</comment>
<comment type="subcellular location">
    <subcellularLocation>
        <location evidence="1">Cytoplasm</location>
    </subcellularLocation>
</comment>
<comment type="similarity">
    <text evidence="1">Belongs to the SurE nucleotidase family.</text>
</comment>
<gene>
    <name evidence="1" type="primary">surE</name>
    <name type="ordered locus">BAbS19_I08450</name>
</gene>
<protein>
    <recommendedName>
        <fullName evidence="1">5'-nucleotidase SurE</fullName>
        <ecNumber evidence="1">3.1.3.5</ecNumber>
    </recommendedName>
    <alternativeName>
        <fullName evidence="1">Nucleoside 5'-monophosphate phosphohydrolase</fullName>
    </alternativeName>
</protein>
<keyword id="KW-0002">3D-structure</keyword>
<keyword id="KW-0963">Cytoplasm</keyword>
<keyword id="KW-0378">Hydrolase</keyword>
<keyword id="KW-0479">Metal-binding</keyword>
<keyword id="KW-0547">Nucleotide-binding</keyword>
<evidence type="ECO:0000255" key="1">
    <source>
        <dbReference type="HAMAP-Rule" id="MF_00060"/>
    </source>
</evidence>
<evidence type="ECO:0007829" key="2">
    <source>
        <dbReference type="PDB" id="4ZG5"/>
    </source>
</evidence>
<feature type="chain" id="PRO_1000091987" description="5'-nucleotidase SurE">
    <location>
        <begin position="1"/>
        <end position="255"/>
    </location>
</feature>
<feature type="binding site" evidence="1">
    <location>
        <position position="8"/>
    </location>
    <ligand>
        <name>a divalent metal cation</name>
        <dbReference type="ChEBI" id="CHEBI:60240"/>
    </ligand>
</feature>
<feature type="binding site" evidence="1">
    <location>
        <position position="9"/>
    </location>
    <ligand>
        <name>a divalent metal cation</name>
        <dbReference type="ChEBI" id="CHEBI:60240"/>
    </ligand>
</feature>
<feature type="binding site" evidence="1">
    <location>
        <position position="40"/>
    </location>
    <ligand>
        <name>a divalent metal cation</name>
        <dbReference type="ChEBI" id="CHEBI:60240"/>
    </ligand>
</feature>
<feature type="binding site" evidence="1">
    <location>
        <position position="92"/>
    </location>
    <ligand>
        <name>a divalent metal cation</name>
        <dbReference type="ChEBI" id="CHEBI:60240"/>
    </ligand>
</feature>
<feature type="strand" evidence="2">
    <location>
        <begin position="3"/>
        <end position="6"/>
    </location>
</feature>
<feature type="helix" evidence="2">
    <location>
        <begin position="14"/>
        <end position="26"/>
    </location>
</feature>
<feature type="strand" evidence="2">
    <location>
        <begin position="30"/>
        <end position="37"/>
    </location>
</feature>
<feature type="strand" evidence="2">
    <location>
        <begin position="52"/>
        <end position="58"/>
    </location>
</feature>
<feature type="strand" evidence="2">
    <location>
        <begin position="61"/>
        <end position="66"/>
    </location>
</feature>
<feature type="helix" evidence="2">
    <location>
        <begin position="68"/>
        <end position="77"/>
    </location>
</feature>
<feature type="strand" evidence="2">
    <location>
        <begin position="80"/>
        <end position="82"/>
    </location>
</feature>
<feature type="strand" evidence="2">
    <location>
        <begin position="85"/>
        <end position="94"/>
    </location>
</feature>
<feature type="helix" evidence="2">
    <location>
        <begin position="98"/>
        <end position="102"/>
    </location>
</feature>
<feature type="helix" evidence="2">
    <location>
        <begin position="105"/>
        <end position="115"/>
    </location>
</feature>
<feature type="strand" evidence="2">
    <location>
        <begin position="120"/>
        <end position="125"/>
    </location>
</feature>
<feature type="strand" evidence="2">
    <location>
        <begin position="128"/>
        <end position="130"/>
    </location>
</feature>
<feature type="strand" evidence="2">
    <location>
        <begin position="133"/>
        <end position="135"/>
    </location>
</feature>
<feature type="helix" evidence="2">
    <location>
        <begin position="138"/>
        <end position="155"/>
    </location>
</feature>
<feature type="strand" evidence="2">
    <location>
        <begin position="161"/>
        <end position="167"/>
    </location>
</feature>
<feature type="helix" evidence="2">
    <location>
        <begin position="172"/>
        <end position="174"/>
    </location>
</feature>
<feature type="strand" evidence="2">
    <location>
        <begin position="177"/>
        <end position="180"/>
    </location>
</feature>
<feature type="strand" evidence="2">
    <location>
        <begin position="190"/>
        <end position="196"/>
    </location>
</feature>
<feature type="strand" evidence="2">
    <location>
        <begin position="202"/>
        <end position="208"/>
    </location>
</feature>
<feature type="helix" evidence="2">
    <location>
        <begin position="220"/>
        <end position="225"/>
    </location>
</feature>
<feature type="strand" evidence="2">
    <location>
        <begin position="228"/>
        <end position="236"/>
    </location>
</feature>
<feature type="helix" evidence="2">
    <location>
        <begin position="241"/>
        <end position="243"/>
    </location>
</feature>
<organism>
    <name type="scientific">Brucella abortus (strain S19)</name>
    <dbReference type="NCBI Taxonomy" id="430066"/>
    <lineage>
        <taxon>Bacteria</taxon>
        <taxon>Pseudomonadati</taxon>
        <taxon>Pseudomonadota</taxon>
        <taxon>Alphaproteobacteria</taxon>
        <taxon>Hyphomicrobiales</taxon>
        <taxon>Brucellaceae</taxon>
        <taxon>Brucella/Ochrobactrum group</taxon>
        <taxon>Brucella</taxon>
    </lineage>
</organism>
<proteinExistence type="evidence at protein level"/>
<name>SURE_BRUA1</name>
<sequence>MRILLTNDDGIHAEGLAVLERIARKLSDDVWVVAPETDQSGLAHSLTLLEPLRLRQIDARHFALRGTPTDCVIMGVRHVLPGAPDLVLSGVNSGANMADDVTYSGTVAGAMEGTLLGVRAIALSQEYEYAGDRRIVPWETAEAHAPELIGRLMEAGWPEGVLLNLNFPNCAPEEVKGVRVTAQGKLSHDARLDERRDGRGFPYFWLHFGRGKAPVADDSDIAAIRSGCISMTPLHLDLTAHKVRAELGAALGVEA</sequence>
<dbReference type="EC" id="3.1.3.5" evidence="1"/>
<dbReference type="EMBL" id="CP000887">
    <property type="protein sequence ID" value="ACD72366.1"/>
    <property type="molecule type" value="Genomic_DNA"/>
</dbReference>
<dbReference type="RefSeq" id="WP_002966786.1">
    <property type="nucleotide sequence ID" value="NC_010742.1"/>
</dbReference>
<dbReference type="PDB" id="4ZG5">
    <property type="method" value="X-ray"/>
    <property type="resolution" value="1.90 A"/>
    <property type="chains" value="A/C/D/G=1-255"/>
</dbReference>
<dbReference type="PDBsum" id="4ZG5"/>
<dbReference type="SMR" id="B2S5B9"/>
<dbReference type="GeneID" id="93016736"/>
<dbReference type="KEGG" id="bmc:BAbS19_I08450"/>
<dbReference type="HOGENOM" id="CLU_045192_1_2_5"/>
<dbReference type="Proteomes" id="UP000002565">
    <property type="component" value="Chromosome 1"/>
</dbReference>
<dbReference type="GO" id="GO:0005737">
    <property type="term" value="C:cytoplasm"/>
    <property type="evidence" value="ECO:0007669"/>
    <property type="project" value="UniProtKB-SubCell"/>
</dbReference>
<dbReference type="GO" id="GO:0008254">
    <property type="term" value="F:3'-nucleotidase activity"/>
    <property type="evidence" value="ECO:0007669"/>
    <property type="project" value="TreeGrafter"/>
</dbReference>
<dbReference type="GO" id="GO:0008253">
    <property type="term" value="F:5'-nucleotidase activity"/>
    <property type="evidence" value="ECO:0007669"/>
    <property type="project" value="UniProtKB-UniRule"/>
</dbReference>
<dbReference type="GO" id="GO:0004309">
    <property type="term" value="F:exopolyphosphatase activity"/>
    <property type="evidence" value="ECO:0007669"/>
    <property type="project" value="TreeGrafter"/>
</dbReference>
<dbReference type="GO" id="GO:0046872">
    <property type="term" value="F:metal ion binding"/>
    <property type="evidence" value="ECO:0007669"/>
    <property type="project" value="UniProtKB-UniRule"/>
</dbReference>
<dbReference type="GO" id="GO:0000166">
    <property type="term" value="F:nucleotide binding"/>
    <property type="evidence" value="ECO:0007669"/>
    <property type="project" value="UniProtKB-KW"/>
</dbReference>
<dbReference type="FunFam" id="3.40.1210.10:FF:000001">
    <property type="entry name" value="5'/3'-nucleotidase SurE"/>
    <property type="match status" value="1"/>
</dbReference>
<dbReference type="Gene3D" id="3.40.1210.10">
    <property type="entry name" value="Survival protein SurE-like phosphatase/nucleotidase"/>
    <property type="match status" value="1"/>
</dbReference>
<dbReference type="HAMAP" id="MF_00060">
    <property type="entry name" value="SurE"/>
    <property type="match status" value="1"/>
</dbReference>
<dbReference type="InterPro" id="IPR030048">
    <property type="entry name" value="SurE"/>
</dbReference>
<dbReference type="InterPro" id="IPR002828">
    <property type="entry name" value="SurE-like_Pase/nucleotidase"/>
</dbReference>
<dbReference type="InterPro" id="IPR036523">
    <property type="entry name" value="SurE-like_sf"/>
</dbReference>
<dbReference type="NCBIfam" id="NF001490">
    <property type="entry name" value="PRK00346.1-4"/>
    <property type="match status" value="1"/>
</dbReference>
<dbReference type="NCBIfam" id="TIGR00087">
    <property type="entry name" value="surE"/>
    <property type="match status" value="1"/>
</dbReference>
<dbReference type="PANTHER" id="PTHR30457">
    <property type="entry name" value="5'-NUCLEOTIDASE SURE"/>
    <property type="match status" value="1"/>
</dbReference>
<dbReference type="PANTHER" id="PTHR30457:SF12">
    <property type="entry name" value="5'_3'-NUCLEOTIDASE SURE"/>
    <property type="match status" value="1"/>
</dbReference>
<dbReference type="Pfam" id="PF01975">
    <property type="entry name" value="SurE"/>
    <property type="match status" value="1"/>
</dbReference>
<dbReference type="SUPFAM" id="SSF64167">
    <property type="entry name" value="SurE-like"/>
    <property type="match status" value="1"/>
</dbReference>
<reference key="1">
    <citation type="journal article" date="2008" name="PLoS ONE">
        <title>Genome sequence of Brucella abortus vaccine strain S19 compared to virulent strains yields candidate virulence genes.</title>
        <authorList>
            <person name="Crasta O.R."/>
            <person name="Folkerts O."/>
            <person name="Fei Z."/>
            <person name="Mane S.P."/>
            <person name="Evans C."/>
            <person name="Martino-Catt S."/>
            <person name="Bricker B."/>
            <person name="Yu G."/>
            <person name="Du L."/>
            <person name="Sobral B.W."/>
        </authorList>
    </citation>
    <scope>NUCLEOTIDE SEQUENCE [LARGE SCALE GENOMIC DNA]</scope>
    <source>
        <strain>S19</strain>
    </source>
</reference>